<evidence type="ECO:0000250" key="1">
    <source>
        <dbReference type="UniProtKB" id="P41595"/>
    </source>
</evidence>
<evidence type="ECO:0000250" key="2">
    <source>
        <dbReference type="UniProtKB" id="Q02152"/>
    </source>
</evidence>
<evidence type="ECO:0000255" key="3">
    <source>
        <dbReference type="PROSITE-ProRule" id="PRU00521"/>
    </source>
</evidence>
<evidence type="ECO:0000269" key="4">
    <source>
    </source>
</evidence>
<reference key="1">
    <citation type="journal article" date="1995" name="FEBS Lett.">
        <title>Expression of serotonin receptor mRNAs in blood vessels.</title>
        <authorList>
            <person name="Ullmer C."/>
            <person name="Schmuck K."/>
            <person name="Kalkman H.O."/>
            <person name="Luebbert H."/>
        </authorList>
    </citation>
    <scope>NUCLEOTIDE SEQUENCE [MRNA]</scope>
    <scope>TISSUE SPECIFICITY</scope>
    <source>
        <tissue>Pulmonary artery</tissue>
    </source>
</reference>
<gene>
    <name type="primary">HTR2B</name>
</gene>
<proteinExistence type="evidence at transcript level"/>
<organism>
    <name type="scientific">Sus scrofa</name>
    <name type="common">Pig</name>
    <dbReference type="NCBI Taxonomy" id="9823"/>
    <lineage>
        <taxon>Eukaryota</taxon>
        <taxon>Metazoa</taxon>
        <taxon>Chordata</taxon>
        <taxon>Craniata</taxon>
        <taxon>Vertebrata</taxon>
        <taxon>Euteleostomi</taxon>
        <taxon>Mammalia</taxon>
        <taxon>Eutheria</taxon>
        <taxon>Laurasiatheria</taxon>
        <taxon>Artiodactyla</taxon>
        <taxon>Suina</taxon>
        <taxon>Suidae</taxon>
        <taxon>Sus</taxon>
    </lineage>
</organism>
<protein>
    <recommendedName>
        <fullName>5-hydroxytryptamine receptor 2B</fullName>
        <shortName>5-HT-2B</shortName>
        <shortName>5-HT2B</shortName>
    </recommendedName>
    <alternativeName>
        <fullName>Serotonin receptor 2B</fullName>
    </alternativeName>
</protein>
<comment type="function">
    <text evidence="1 2">G-protein coupled receptor for 5-hydroxytryptamine (serotonin). Also functions as a receptor for various ergot alkaloid derivatives and psychoactive substances. Ligand binding causes a conformation change that triggers signaling via guanine nucleotide-binding proteins (G proteins) and modulates the activity of downstream effectors. HTR2B is coupled to G(q)/G(11) G alpha proteins and activates phospholipase C-beta, releasing diacylglycerol (DAG) and inositol 1,4,5-trisphosphate (IP3) second messengers that modulate the activity of phosphatidylinositol 3-kinase and promote the release of Ca(2+) ions from intracellular stores, respectively. Beta-arrestin family members inhibit signaling via G proteins and mediate activation of alternative signaling pathways (By similarity). Plays a role in the regulation of dopamine and 5-hydroxytryptamine release, 5-hydroxytryptamine uptake and in the regulation of extracellular dopamine and 5-hydroxytryptamine levels, and thereby affects neural activity. May play a role in the perception of pain (By similarity). Plays a role in the regulation of behavior, including impulsive behavior (By similarity). Required for normal proliferation of embryonic cardiac myocytes and normal heart development. Protects cardiomyocytes against apoptosis. Plays a role in the adaptation of pulmonary arteries to chronic hypoxia. Plays a role in vasoconstriction. Required for normal osteoblast function and proliferation, and for maintaining normal bone density. Required for normal proliferation of the interstitial cells of Cajal in the intestine (By similarity).</text>
</comment>
<comment type="subunit">
    <text evidence="1">Interacts (via C-terminus) with MPDZ.</text>
</comment>
<comment type="subcellular location">
    <subcellularLocation>
        <location evidence="1">Cell membrane</location>
        <topology evidence="1">Multi-pass membrane protein</topology>
    </subcellularLocation>
    <subcellularLocation>
        <location evidence="2">Synapse</location>
        <location evidence="2">Synaptosome</location>
    </subcellularLocation>
</comment>
<comment type="tissue specificity">
    <text evidence="4">Detected in aorta, renal artery, jugular vein, vena cava and femoral vein.</text>
</comment>
<comment type="domain">
    <text evidence="1">Ligands are bound in a hydrophobic pocket formed by the transmembrane helices.</text>
</comment>
<comment type="similarity">
    <text evidence="3">Belongs to the G-protein coupled receptor 1 family.</text>
</comment>
<dbReference type="EMBL" id="Z48174">
    <property type="protein sequence ID" value="CAA88197.1"/>
    <property type="molecule type" value="mRNA"/>
</dbReference>
<dbReference type="PIR" id="S66491">
    <property type="entry name" value="S66491"/>
</dbReference>
<dbReference type="SMR" id="Q29005"/>
<dbReference type="STRING" id="9823.ENSSSCP00000017240"/>
<dbReference type="PaxDb" id="9823-ENSSSCP00000017240"/>
<dbReference type="eggNOG" id="KOG3656">
    <property type="taxonomic scope" value="Eukaryota"/>
</dbReference>
<dbReference type="HOGENOM" id="CLU_009579_11_3_1"/>
<dbReference type="InParanoid" id="Q29005"/>
<dbReference type="Proteomes" id="UP000008227">
    <property type="component" value="Unplaced"/>
</dbReference>
<dbReference type="Proteomes" id="UP000314985">
    <property type="component" value="Unplaced"/>
</dbReference>
<dbReference type="Proteomes" id="UP000694570">
    <property type="component" value="Unplaced"/>
</dbReference>
<dbReference type="Proteomes" id="UP000694571">
    <property type="component" value="Unplaced"/>
</dbReference>
<dbReference type="Proteomes" id="UP000694720">
    <property type="component" value="Unplaced"/>
</dbReference>
<dbReference type="Proteomes" id="UP000694722">
    <property type="component" value="Unplaced"/>
</dbReference>
<dbReference type="Proteomes" id="UP000694723">
    <property type="component" value="Unplaced"/>
</dbReference>
<dbReference type="Proteomes" id="UP000694724">
    <property type="component" value="Unplaced"/>
</dbReference>
<dbReference type="Proteomes" id="UP000694725">
    <property type="component" value="Unplaced"/>
</dbReference>
<dbReference type="Proteomes" id="UP000694726">
    <property type="component" value="Unplaced"/>
</dbReference>
<dbReference type="Proteomes" id="UP000694727">
    <property type="component" value="Unplaced"/>
</dbReference>
<dbReference type="Proteomes" id="UP000694728">
    <property type="component" value="Unplaced"/>
</dbReference>
<dbReference type="GO" id="GO:0043005">
    <property type="term" value="C:neuron projection"/>
    <property type="evidence" value="ECO:0007669"/>
    <property type="project" value="UniProtKB-KW"/>
</dbReference>
<dbReference type="GO" id="GO:0005886">
    <property type="term" value="C:plasma membrane"/>
    <property type="evidence" value="ECO:0007669"/>
    <property type="project" value="UniProtKB-SubCell"/>
</dbReference>
<dbReference type="GO" id="GO:0045202">
    <property type="term" value="C:synapse"/>
    <property type="evidence" value="ECO:0007669"/>
    <property type="project" value="UniProtKB-SubCell"/>
</dbReference>
<dbReference type="GO" id="GO:0004930">
    <property type="term" value="F:G protein-coupled receptor activity"/>
    <property type="evidence" value="ECO:0007669"/>
    <property type="project" value="UniProtKB-KW"/>
</dbReference>
<dbReference type="FunFam" id="1.20.1070.10:FF:001768">
    <property type="entry name" value="5-hydroxytryptamine receptor 2B"/>
    <property type="match status" value="1"/>
</dbReference>
<dbReference type="Gene3D" id="1.20.1070.10">
    <property type="entry name" value="Rhodopsin 7-helix transmembrane proteins"/>
    <property type="match status" value="1"/>
</dbReference>
<dbReference type="InterPro" id="IPR000276">
    <property type="entry name" value="GPCR_Rhodpsn"/>
</dbReference>
<dbReference type="InterPro" id="IPR017452">
    <property type="entry name" value="GPCR_Rhodpsn_7TM"/>
</dbReference>
<dbReference type="PANTHER" id="PTHR24247">
    <property type="entry name" value="5-HYDROXYTRYPTAMINE RECEPTOR"/>
    <property type="match status" value="1"/>
</dbReference>
<dbReference type="PANTHER" id="PTHR24247:SF31">
    <property type="entry name" value="5-HYDROXYTRYPTAMINE RECEPTOR 2B"/>
    <property type="match status" value="1"/>
</dbReference>
<dbReference type="Pfam" id="PF00001">
    <property type="entry name" value="7tm_1"/>
    <property type="match status" value="1"/>
</dbReference>
<dbReference type="PRINTS" id="PR00237">
    <property type="entry name" value="GPCRRHODOPSN"/>
</dbReference>
<dbReference type="SUPFAM" id="SSF81321">
    <property type="entry name" value="Family A G protein-coupled receptor-like"/>
    <property type="match status" value="1"/>
</dbReference>
<dbReference type="PROSITE" id="PS00237">
    <property type="entry name" value="G_PROTEIN_RECEP_F1_1"/>
    <property type="match status" value="1"/>
</dbReference>
<dbReference type="PROSITE" id="PS50262">
    <property type="entry name" value="G_PROTEIN_RECEP_F1_2"/>
    <property type="match status" value="1"/>
</dbReference>
<name>5HT2B_PIG</name>
<feature type="chain" id="PRO_0000068955" description="5-hydroxytryptamine receptor 2B">
    <location>
        <begin position="1" status="less than"/>
        <end position="60" status="greater than"/>
    </location>
</feature>
<feature type="topological domain" description="Extracellular" evidence="1">
    <location>
        <begin position="1" status="less than"/>
        <end position="4"/>
    </location>
</feature>
<feature type="transmembrane region" description="Helical; Name=3" evidence="1">
    <location>
        <begin position="5"/>
        <end position="26"/>
    </location>
</feature>
<feature type="topological domain" description="Cytoplasmic" evidence="1">
    <location>
        <begin position="27"/>
        <end position="46"/>
    </location>
</feature>
<feature type="transmembrane region" description="Helical; Name=4" evidence="1">
    <location>
        <begin position="47"/>
        <end position="60"/>
    </location>
</feature>
<feature type="short sequence motif" description="DRY motif; important for ligand-induced conformation changes" evidence="1">
    <location>
        <begin position="27"/>
        <end position="29"/>
    </location>
</feature>
<feature type="binding site" evidence="1">
    <location>
        <position position="10"/>
    </location>
    <ligand>
        <name>ergotamine</name>
        <dbReference type="ChEBI" id="CHEBI:190463"/>
        <note>agonist</note>
    </ligand>
</feature>
<feature type="binding site" evidence="1">
    <location>
        <position position="15"/>
    </location>
    <ligand>
        <name>ergotamine</name>
        <dbReference type="ChEBI" id="CHEBI:190463"/>
        <note>agonist</note>
    </ligand>
</feature>
<feature type="non-terminal residue">
    <location>
        <position position="1"/>
    </location>
</feature>
<feature type="non-terminal residue">
    <location>
        <position position="60"/>
    </location>
</feature>
<sequence>VLCPAWLFLDVLFSTASIMHLCAISVDRYIAIKKPIQANQYNSRATAFIKITVVWLISIG</sequence>
<accession>Q29005</accession>
<keyword id="KW-0085">Behavior</keyword>
<keyword id="KW-1003">Cell membrane</keyword>
<keyword id="KW-0297">G-protein coupled receptor</keyword>
<keyword id="KW-0449">Lipoprotein</keyword>
<keyword id="KW-0472">Membrane</keyword>
<keyword id="KW-0564">Palmitate</keyword>
<keyword id="KW-0675">Receptor</keyword>
<keyword id="KW-1185">Reference proteome</keyword>
<keyword id="KW-0770">Synapse</keyword>
<keyword id="KW-0771">Synaptosome</keyword>
<keyword id="KW-0807">Transducer</keyword>
<keyword id="KW-0812">Transmembrane</keyword>
<keyword id="KW-1133">Transmembrane helix</keyword>